<organism>
    <name type="scientific">Borrelia duttonii (strain Ly)</name>
    <dbReference type="NCBI Taxonomy" id="412419"/>
    <lineage>
        <taxon>Bacteria</taxon>
        <taxon>Pseudomonadati</taxon>
        <taxon>Spirochaetota</taxon>
        <taxon>Spirochaetia</taxon>
        <taxon>Spirochaetales</taxon>
        <taxon>Borreliaceae</taxon>
        <taxon>Borrelia</taxon>
    </lineage>
</organism>
<comment type="function">
    <text evidence="1">Involved in peptide bond synthesis. Stimulates efficient translation and peptide-bond synthesis on native or reconstituted 70S ribosomes in vitro. Probably functions indirectly by altering the affinity of the ribosome for aminoacyl-tRNA, thus increasing their reactivity as acceptors for peptidyl transferase.</text>
</comment>
<comment type="pathway">
    <text evidence="1">Protein biosynthesis; polypeptide chain elongation.</text>
</comment>
<comment type="subcellular location">
    <subcellularLocation>
        <location evidence="1">Cytoplasm</location>
    </subcellularLocation>
</comment>
<comment type="similarity">
    <text evidence="1">Belongs to the elongation factor P family.</text>
</comment>
<dbReference type="EMBL" id="CP000976">
    <property type="protein sequence ID" value="ACH93168.1"/>
    <property type="molecule type" value="Genomic_DNA"/>
</dbReference>
<dbReference type="RefSeq" id="WP_012537980.1">
    <property type="nucleotide sequence ID" value="NC_011229.1"/>
</dbReference>
<dbReference type="SMR" id="B5RL39"/>
<dbReference type="STRING" id="412419.BDU_215"/>
<dbReference type="KEGG" id="bdu:BDU_215"/>
<dbReference type="eggNOG" id="COG0231">
    <property type="taxonomic scope" value="Bacteria"/>
</dbReference>
<dbReference type="HOGENOM" id="CLU_074944_0_2_12"/>
<dbReference type="OrthoDB" id="9801844at2"/>
<dbReference type="UniPathway" id="UPA00345"/>
<dbReference type="Proteomes" id="UP000000611">
    <property type="component" value="Chromosome"/>
</dbReference>
<dbReference type="GO" id="GO:0005737">
    <property type="term" value="C:cytoplasm"/>
    <property type="evidence" value="ECO:0007669"/>
    <property type="project" value="UniProtKB-SubCell"/>
</dbReference>
<dbReference type="GO" id="GO:0003746">
    <property type="term" value="F:translation elongation factor activity"/>
    <property type="evidence" value="ECO:0007669"/>
    <property type="project" value="UniProtKB-UniRule"/>
</dbReference>
<dbReference type="GO" id="GO:0043043">
    <property type="term" value="P:peptide biosynthetic process"/>
    <property type="evidence" value="ECO:0007669"/>
    <property type="project" value="InterPro"/>
</dbReference>
<dbReference type="CDD" id="cd04470">
    <property type="entry name" value="S1_EF-P_repeat_1"/>
    <property type="match status" value="1"/>
</dbReference>
<dbReference type="CDD" id="cd05794">
    <property type="entry name" value="S1_EF-P_repeat_2"/>
    <property type="match status" value="1"/>
</dbReference>
<dbReference type="FunFam" id="2.40.50.140:FF:000004">
    <property type="entry name" value="Elongation factor P"/>
    <property type="match status" value="1"/>
</dbReference>
<dbReference type="Gene3D" id="2.30.30.30">
    <property type="match status" value="1"/>
</dbReference>
<dbReference type="Gene3D" id="2.40.50.140">
    <property type="entry name" value="Nucleic acid-binding proteins"/>
    <property type="match status" value="2"/>
</dbReference>
<dbReference type="HAMAP" id="MF_00141">
    <property type="entry name" value="EF_P"/>
    <property type="match status" value="1"/>
</dbReference>
<dbReference type="InterPro" id="IPR015365">
    <property type="entry name" value="Elong-fact-P_C"/>
</dbReference>
<dbReference type="InterPro" id="IPR012340">
    <property type="entry name" value="NA-bd_OB-fold"/>
</dbReference>
<dbReference type="InterPro" id="IPR014722">
    <property type="entry name" value="Rib_uL2_dom2"/>
</dbReference>
<dbReference type="InterPro" id="IPR020599">
    <property type="entry name" value="Transl_elong_fac_P/YeiP"/>
</dbReference>
<dbReference type="InterPro" id="IPR013185">
    <property type="entry name" value="Transl_elong_KOW-like"/>
</dbReference>
<dbReference type="InterPro" id="IPR001059">
    <property type="entry name" value="Transl_elong_P/YeiP_cen"/>
</dbReference>
<dbReference type="InterPro" id="IPR011768">
    <property type="entry name" value="Transl_elongation_fac_P"/>
</dbReference>
<dbReference type="InterPro" id="IPR008991">
    <property type="entry name" value="Translation_prot_SH3-like_sf"/>
</dbReference>
<dbReference type="NCBIfam" id="TIGR00038">
    <property type="entry name" value="efp"/>
    <property type="match status" value="1"/>
</dbReference>
<dbReference type="NCBIfam" id="NF001810">
    <property type="entry name" value="PRK00529.1"/>
    <property type="match status" value="1"/>
</dbReference>
<dbReference type="PANTHER" id="PTHR30053">
    <property type="entry name" value="ELONGATION FACTOR P"/>
    <property type="match status" value="1"/>
</dbReference>
<dbReference type="PANTHER" id="PTHR30053:SF14">
    <property type="entry name" value="TRANSLATION ELONGATION FACTOR KOW-LIKE DOMAIN-CONTAINING PROTEIN"/>
    <property type="match status" value="1"/>
</dbReference>
<dbReference type="Pfam" id="PF01132">
    <property type="entry name" value="EFP"/>
    <property type="match status" value="1"/>
</dbReference>
<dbReference type="Pfam" id="PF08207">
    <property type="entry name" value="EFP_N"/>
    <property type="match status" value="1"/>
</dbReference>
<dbReference type="Pfam" id="PF09285">
    <property type="entry name" value="Elong-fact-P_C"/>
    <property type="match status" value="1"/>
</dbReference>
<dbReference type="PIRSF" id="PIRSF005901">
    <property type="entry name" value="EF-P"/>
    <property type="match status" value="1"/>
</dbReference>
<dbReference type="SMART" id="SM01185">
    <property type="entry name" value="EFP"/>
    <property type="match status" value="1"/>
</dbReference>
<dbReference type="SMART" id="SM00841">
    <property type="entry name" value="Elong-fact-P_C"/>
    <property type="match status" value="1"/>
</dbReference>
<dbReference type="SUPFAM" id="SSF50249">
    <property type="entry name" value="Nucleic acid-binding proteins"/>
    <property type="match status" value="2"/>
</dbReference>
<dbReference type="SUPFAM" id="SSF50104">
    <property type="entry name" value="Translation proteins SH3-like domain"/>
    <property type="match status" value="1"/>
</dbReference>
<protein>
    <recommendedName>
        <fullName evidence="1">Elongation factor P</fullName>
        <shortName evidence="1">EF-P</shortName>
    </recommendedName>
</protein>
<gene>
    <name evidence="1" type="primary">efp</name>
    <name type="ordered locus">BDU_215</name>
</gene>
<accession>B5RL39</accession>
<proteinExistence type="inferred from homology"/>
<keyword id="KW-0963">Cytoplasm</keyword>
<keyword id="KW-0251">Elongation factor</keyword>
<keyword id="KW-0648">Protein biosynthesis</keyword>
<sequence length="192" mass="21668">MSTIKSGDIDKGSFLLFKGMPHIVLEREFSKMGRGGSIVRLKLKNLKNKSVIKETLKGSDTVEEIEVLEVNSQYLYKDNESLIFMDLETYDQFSVNLRDVVNLEDKVLFLQEAEVYSLIKWGNEVIDLKLPPKVAFEVIDAEIAVKGDTVTNAMKNVTLHTGLVVKAPLFINIGDKILVNSETKEYAERVKV</sequence>
<feature type="chain" id="PRO_1000096123" description="Elongation factor P">
    <location>
        <begin position="1"/>
        <end position="192"/>
    </location>
</feature>
<name>EFP_BORDL</name>
<evidence type="ECO:0000255" key="1">
    <source>
        <dbReference type="HAMAP-Rule" id="MF_00141"/>
    </source>
</evidence>
<reference key="1">
    <citation type="journal article" date="2008" name="PLoS Genet.">
        <title>The genome of Borrelia recurrentis, the agent of deadly louse-borne relapsing fever, is a degraded subset of tick-borne Borrelia duttonii.</title>
        <authorList>
            <person name="Lescot M."/>
            <person name="Audic S."/>
            <person name="Robert C."/>
            <person name="Nguyen T.T."/>
            <person name="Blanc G."/>
            <person name="Cutler S.J."/>
            <person name="Wincker P."/>
            <person name="Couloux A."/>
            <person name="Claverie J.-M."/>
            <person name="Raoult D."/>
            <person name="Drancourt M."/>
        </authorList>
    </citation>
    <scope>NUCLEOTIDE SEQUENCE [LARGE SCALE GENOMIC DNA]</scope>
    <source>
        <strain>Ly</strain>
    </source>
</reference>